<keyword id="KW-0030">Aminoacyl-tRNA synthetase</keyword>
<keyword id="KW-0067">ATP-binding</keyword>
<keyword id="KW-0963">Cytoplasm</keyword>
<keyword id="KW-0436">Ligase</keyword>
<keyword id="KW-0547">Nucleotide-binding</keyword>
<keyword id="KW-0648">Protein biosynthesis</keyword>
<sequence>MLDIKFLRTNFEEVKAKLQHRGEDLTDFGRFEELDTRRRELLVQTEELKSKRNEVSQQISVLKREKKDAEALILEMREVGEKVKDLDNELRTVEEDLERLMLSIPNIPHESAPVGETEDDNVVARTWGEVKEFNFEPKPHWDLATDLGILDFERAGKVTGSRFVFYKGAGARLERALISFMLDLHTDEHGYEEVLPPYMVNRASMTGTGQLPKFEEDAFRIESEDYFLIPTAEVPVTNMHRDEILNKEQLPIRYAAFSSCFRSEAGSAGRDTRGLIRQHQFNKVELVKFVKPEDSYEELEKLTNDAERVLQLLELPYRVMSMCTGDLGFTAAKKYDIEVWIPSYGTYREISSCSNFEAFQARRANIRFRREPNGKPEHVHTLNGSGLAIGRTVAAILENYQQEDGTIIIPEVLRPYMGGKTVIK</sequence>
<protein>
    <recommendedName>
        <fullName evidence="1">Serine--tRNA ligase</fullName>
        <ecNumber evidence="1">6.1.1.11</ecNumber>
    </recommendedName>
    <alternativeName>
        <fullName evidence="1">Seryl-tRNA synthetase</fullName>
        <shortName evidence="1">SerRS</shortName>
    </alternativeName>
    <alternativeName>
        <fullName evidence="1">Seryl-tRNA(Ser/Sec) synthetase</fullName>
    </alternativeName>
</protein>
<organism>
    <name type="scientific">Bacillus cereus (strain ZK / E33L)</name>
    <dbReference type="NCBI Taxonomy" id="288681"/>
    <lineage>
        <taxon>Bacteria</taxon>
        <taxon>Bacillati</taxon>
        <taxon>Bacillota</taxon>
        <taxon>Bacilli</taxon>
        <taxon>Bacillales</taxon>
        <taxon>Bacillaceae</taxon>
        <taxon>Bacillus</taxon>
        <taxon>Bacillus cereus group</taxon>
    </lineage>
</organism>
<feature type="chain" id="PRO_0000122000" description="Serine--tRNA ligase">
    <location>
        <begin position="1"/>
        <end position="424"/>
    </location>
</feature>
<feature type="binding site" evidence="1">
    <location>
        <begin position="231"/>
        <end position="233"/>
    </location>
    <ligand>
        <name>L-serine</name>
        <dbReference type="ChEBI" id="CHEBI:33384"/>
    </ligand>
</feature>
<feature type="binding site" evidence="1">
    <location>
        <begin position="262"/>
        <end position="264"/>
    </location>
    <ligand>
        <name>ATP</name>
        <dbReference type="ChEBI" id="CHEBI:30616"/>
    </ligand>
</feature>
<feature type="binding site" evidence="1">
    <location>
        <position position="285"/>
    </location>
    <ligand>
        <name>L-serine</name>
        <dbReference type="ChEBI" id="CHEBI:33384"/>
    </ligand>
</feature>
<feature type="binding site" evidence="1">
    <location>
        <begin position="349"/>
        <end position="352"/>
    </location>
    <ligand>
        <name>ATP</name>
        <dbReference type="ChEBI" id="CHEBI:30616"/>
    </ligand>
</feature>
<feature type="binding site" evidence="1">
    <location>
        <position position="385"/>
    </location>
    <ligand>
        <name>L-serine</name>
        <dbReference type="ChEBI" id="CHEBI:33384"/>
    </ligand>
</feature>
<dbReference type="EC" id="6.1.1.11" evidence="1"/>
<dbReference type="EMBL" id="CP000001">
    <property type="protein sequence ID" value="AAU20215.1"/>
    <property type="molecule type" value="Genomic_DNA"/>
</dbReference>
<dbReference type="RefSeq" id="WP_000884185.1">
    <property type="nucleotide sequence ID" value="NZ_CP009968.1"/>
</dbReference>
<dbReference type="SMR" id="Q63HF6"/>
<dbReference type="KEGG" id="bcz:BCE33L0013"/>
<dbReference type="PATRIC" id="fig|288681.22.peg.143"/>
<dbReference type="UniPathway" id="UPA00906">
    <property type="reaction ID" value="UER00895"/>
</dbReference>
<dbReference type="Proteomes" id="UP000002612">
    <property type="component" value="Chromosome"/>
</dbReference>
<dbReference type="GO" id="GO:0005737">
    <property type="term" value="C:cytoplasm"/>
    <property type="evidence" value="ECO:0007669"/>
    <property type="project" value="UniProtKB-SubCell"/>
</dbReference>
<dbReference type="GO" id="GO:0005524">
    <property type="term" value="F:ATP binding"/>
    <property type="evidence" value="ECO:0007669"/>
    <property type="project" value="UniProtKB-UniRule"/>
</dbReference>
<dbReference type="GO" id="GO:0140096">
    <property type="term" value="F:catalytic activity, acting on a protein"/>
    <property type="evidence" value="ECO:0007669"/>
    <property type="project" value="UniProtKB-ARBA"/>
</dbReference>
<dbReference type="GO" id="GO:0004828">
    <property type="term" value="F:serine-tRNA ligase activity"/>
    <property type="evidence" value="ECO:0007669"/>
    <property type="project" value="UniProtKB-UniRule"/>
</dbReference>
<dbReference type="GO" id="GO:0016740">
    <property type="term" value="F:transferase activity"/>
    <property type="evidence" value="ECO:0007669"/>
    <property type="project" value="UniProtKB-ARBA"/>
</dbReference>
<dbReference type="GO" id="GO:0016260">
    <property type="term" value="P:selenocysteine biosynthetic process"/>
    <property type="evidence" value="ECO:0007669"/>
    <property type="project" value="UniProtKB-UniRule"/>
</dbReference>
<dbReference type="GO" id="GO:0006434">
    <property type="term" value="P:seryl-tRNA aminoacylation"/>
    <property type="evidence" value="ECO:0007669"/>
    <property type="project" value="UniProtKB-UniRule"/>
</dbReference>
<dbReference type="CDD" id="cd00770">
    <property type="entry name" value="SerRS_core"/>
    <property type="match status" value="1"/>
</dbReference>
<dbReference type="Gene3D" id="3.30.930.10">
    <property type="entry name" value="Bira Bifunctional Protein, Domain 2"/>
    <property type="match status" value="1"/>
</dbReference>
<dbReference type="Gene3D" id="1.10.287.40">
    <property type="entry name" value="Serine-tRNA synthetase, tRNA binding domain"/>
    <property type="match status" value="1"/>
</dbReference>
<dbReference type="HAMAP" id="MF_00176">
    <property type="entry name" value="Ser_tRNA_synth_type1"/>
    <property type="match status" value="1"/>
</dbReference>
<dbReference type="InterPro" id="IPR002314">
    <property type="entry name" value="aa-tRNA-synt_IIb"/>
</dbReference>
<dbReference type="InterPro" id="IPR006195">
    <property type="entry name" value="aa-tRNA-synth_II"/>
</dbReference>
<dbReference type="InterPro" id="IPR045864">
    <property type="entry name" value="aa-tRNA-synth_II/BPL/LPL"/>
</dbReference>
<dbReference type="InterPro" id="IPR002317">
    <property type="entry name" value="Ser-tRNA-ligase_type_1"/>
</dbReference>
<dbReference type="InterPro" id="IPR015866">
    <property type="entry name" value="Ser-tRNA-synth_1_N"/>
</dbReference>
<dbReference type="InterPro" id="IPR042103">
    <property type="entry name" value="SerRS_1_N_sf"/>
</dbReference>
<dbReference type="InterPro" id="IPR033729">
    <property type="entry name" value="SerRS_core"/>
</dbReference>
<dbReference type="InterPro" id="IPR010978">
    <property type="entry name" value="tRNA-bd_arm"/>
</dbReference>
<dbReference type="NCBIfam" id="TIGR00414">
    <property type="entry name" value="serS"/>
    <property type="match status" value="1"/>
</dbReference>
<dbReference type="PANTHER" id="PTHR43697:SF1">
    <property type="entry name" value="SERINE--TRNA LIGASE"/>
    <property type="match status" value="1"/>
</dbReference>
<dbReference type="PANTHER" id="PTHR43697">
    <property type="entry name" value="SERYL-TRNA SYNTHETASE"/>
    <property type="match status" value="1"/>
</dbReference>
<dbReference type="Pfam" id="PF02403">
    <property type="entry name" value="Seryl_tRNA_N"/>
    <property type="match status" value="1"/>
</dbReference>
<dbReference type="Pfam" id="PF00587">
    <property type="entry name" value="tRNA-synt_2b"/>
    <property type="match status" value="1"/>
</dbReference>
<dbReference type="PIRSF" id="PIRSF001529">
    <property type="entry name" value="Ser-tRNA-synth_IIa"/>
    <property type="match status" value="1"/>
</dbReference>
<dbReference type="PRINTS" id="PR00981">
    <property type="entry name" value="TRNASYNTHSER"/>
</dbReference>
<dbReference type="SUPFAM" id="SSF55681">
    <property type="entry name" value="Class II aaRS and biotin synthetases"/>
    <property type="match status" value="1"/>
</dbReference>
<dbReference type="SUPFAM" id="SSF46589">
    <property type="entry name" value="tRNA-binding arm"/>
    <property type="match status" value="1"/>
</dbReference>
<dbReference type="PROSITE" id="PS50862">
    <property type="entry name" value="AA_TRNA_LIGASE_II"/>
    <property type="match status" value="1"/>
</dbReference>
<accession>Q63HF6</accession>
<reference key="1">
    <citation type="journal article" date="2006" name="J. Bacteriol.">
        <title>Pathogenomic sequence analysis of Bacillus cereus and Bacillus thuringiensis isolates closely related to Bacillus anthracis.</title>
        <authorList>
            <person name="Han C.S."/>
            <person name="Xie G."/>
            <person name="Challacombe J.F."/>
            <person name="Altherr M.R."/>
            <person name="Bhotika S.S."/>
            <person name="Bruce D."/>
            <person name="Campbell C.S."/>
            <person name="Campbell M.L."/>
            <person name="Chen J."/>
            <person name="Chertkov O."/>
            <person name="Cleland C."/>
            <person name="Dimitrijevic M."/>
            <person name="Doggett N.A."/>
            <person name="Fawcett J.J."/>
            <person name="Glavina T."/>
            <person name="Goodwin L.A."/>
            <person name="Hill K.K."/>
            <person name="Hitchcock P."/>
            <person name="Jackson P.J."/>
            <person name="Keim P."/>
            <person name="Kewalramani A.R."/>
            <person name="Longmire J."/>
            <person name="Lucas S."/>
            <person name="Malfatti S."/>
            <person name="McMurry K."/>
            <person name="Meincke L.J."/>
            <person name="Misra M."/>
            <person name="Moseman B.L."/>
            <person name="Mundt M."/>
            <person name="Munk A.C."/>
            <person name="Okinaka R.T."/>
            <person name="Parson-Quintana B."/>
            <person name="Reilly L.P."/>
            <person name="Richardson P."/>
            <person name="Robinson D.L."/>
            <person name="Rubin E."/>
            <person name="Saunders E."/>
            <person name="Tapia R."/>
            <person name="Tesmer J.G."/>
            <person name="Thayer N."/>
            <person name="Thompson L.S."/>
            <person name="Tice H."/>
            <person name="Ticknor L.O."/>
            <person name="Wills P.L."/>
            <person name="Brettin T.S."/>
            <person name="Gilna P."/>
        </authorList>
    </citation>
    <scope>NUCLEOTIDE SEQUENCE [LARGE SCALE GENOMIC DNA]</scope>
    <source>
        <strain>ZK / E33L</strain>
    </source>
</reference>
<comment type="function">
    <text evidence="1">Catalyzes the attachment of serine to tRNA(Ser). Is also able to aminoacylate tRNA(Sec) with serine, to form the misacylated tRNA L-seryl-tRNA(Sec), which will be further converted into selenocysteinyl-tRNA(Sec).</text>
</comment>
<comment type="catalytic activity">
    <reaction evidence="1">
        <text>tRNA(Ser) + L-serine + ATP = L-seryl-tRNA(Ser) + AMP + diphosphate + H(+)</text>
        <dbReference type="Rhea" id="RHEA:12292"/>
        <dbReference type="Rhea" id="RHEA-COMP:9669"/>
        <dbReference type="Rhea" id="RHEA-COMP:9703"/>
        <dbReference type="ChEBI" id="CHEBI:15378"/>
        <dbReference type="ChEBI" id="CHEBI:30616"/>
        <dbReference type="ChEBI" id="CHEBI:33019"/>
        <dbReference type="ChEBI" id="CHEBI:33384"/>
        <dbReference type="ChEBI" id="CHEBI:78442"/>
        <dbReference type="ChEBI" id="CHEBI:78533"/>
        <dbReference type="ChEBI" id="CHEBI:456215"/>
        <dbReference type="EC" id="6.1.1.11"/>
    </reaction>
</comment>
<comment type="catalytic activity">
    <reaction evidence="1">
        <text>tRNA(Sec) + L-serine + ATP = L-seryl-tRNA(Sec) + AMP + diphosphate + H(+)</text>
        <dbReference type="Rhea" id="RHEA:42580"/>
        <dbReference type="Rhea" id="RHEA-COMP:9742"/>
        <dbReference type="Rhea" id="RHEA-COMP:10128"/>
        <dbReference type="ChEBI" id="CHEBI:15378"/>
        <dbReference type="ChEBI" id="CHEBI:30616"/>
        <dbReference type="ChEBI" id="CHEBI:33019"/>
        <dbReference type="ChEBI" id="CHEBI:33384"/>
        <dbReference type="ChEBI" id="CHEBI:78442"/>
        <dbReference type="ChEBI" id="CHEBI:78533"/>
        <dbReference type="ChEBI" id="CHEBI:456215"/>
        <dbReference type="EC" id="6.1.1.11"/>
    </reaction>
</comment>
<comment type="pathway">
    <text evidence="1">Aminoacyl-tRNA biosynthesis; selenocysteinyl-tRNA(Sec) biosynthesis; L-seryl-tRNA(Sec) from L-serine and tRNA(Sec): step 1/1.</text>
</comment>
<comment type="subunit">
    <text evidence="1">Homodimer. The tRNA molecule binds across the dimer.</text>
</comment>
<comment type="subcellular location">
    <subcellularLocation>
        <location evidence="1">Cytoplasm</location>
    </subcellularLocation>
</comment>
<comment type="domain">
    <text evidence="1">Consists of two distinct domains, a catalytic core and a N-terminal extension that is involved in tRNA binding.</text>
</comment>
<comment type="similarity">
    <text evidence="1">Belongs to the class-II aminoacyl-tRNA synthetase family. Type-1 seryl-tRNA synthetase subfamily.</text>
</comment>
<gene>
    <name evidence="1" type="primary">serS</name>
    <name type="ordered locus">BCE33L0013</name>
</gene>
<name>SYS_BACCZ</name>
<evidence type="ECO:0000255" key="1">
    <source>
        <dbReference type="HAMAP-Rule" id="MF_00176"/>
    </source>
</evidence>
<proteinExistence type="inferred from homology"/>